<evidence type="ECO:0000255" key="1">
    <source>
        <dbReference type="HAMAP-Rule" id="MF_04021"/>
    </source>
</evidence>
<evidence type="ECO:0000256" key="2">
    <source>
        <dbReference type="SAM" id="MobiDB-lite"/>
    </source>
</evidence>
<proteinExistence type="inferred from homology"/>
<name>SCP_HHV6H</name>
<reference key="1">
    <citation type="journal article" date="1999" name="J. Virol.">
        <title>Comparison of the complete DNA sequences of human herpesvirus 6 variants A and B.</title>
        <authorList>
            <person name="Isegawa Y."/>
            <person name="Mukai T."/>
            <person name="Nakano K."/>
            <person name="Kagawa M."/>
            <person name="Chen J."/>
            <person name="Mori Y."/>
            <person name="Sunagawa T."/>
            <person name="Kawanishi K."/>
            <person name="Sashihara J."/>
            <person name="Hata A."/>
            <person name="Zou P."/>
            <person name="Kosuge H."/>
            <person name="Yamanishi K."/>
        </authorList>
    </citation>
    <scope>NUCLEOTIDE SEQUENCE [LARGE SCALE GENOMIC DNA]</scope>
    <source>
        <strain>HST</strain>
    </source>
</reference>
<gene>
    <name evidence="1" type="primary">SCP</name>
    <name type="synonym">U32</name>
</gene>
<organism>
    <name type="scientific">Human herpesvirus 6B</name>
    <name type="common">HHV-6 variant B</name>
    <name type="synonym">Human B lymphotropic virus</name>
    <dbReference type="NCBI Taxonomy" id="32604"/>
    <lineage>
        <taxon>Viruses</taxon>
        <taxon>Duplodnaviria</taxon>
        <taxon>Heunggongvirae</taxon>
        <taxon>Peploviricota</taxon>
        <taxon>Herviviricetes</taxon>
        <taxon>Herpesvirales</taxon>
        <taxon>Orthoherpesviridae</taxon>
        <taxon>Betaherpesvirinae</taxon>
        <taxon>Roseolovirus</taxon>
        <taxon>Roseolovirus humanbeta6b</taxon>
    </lineage>
</organism>
<sequence>MTTIRGDDLSNQITQISGSSSKKEEEKKKQQMLTGVLGLQPTMANHPVLGVFLPKYAKQNGGNVDKTAFRLDLIRMLALHRLNTKTGSD</sequence>
<organismHost>
    <name type="scientific">Homo sapiens</name>
    <name type="common">Human</name>
    <dbReference type="NCBI Taxonomy" id="9606"/>
</organismHost>
<accession>P0DTP2</accession>
<accession>Q77PU9</accession>
<accession>Q9WT32</accession>
<feature type="chain" id="PRO_0000461146" description="Small capsomere-interacting protein">
    <location>
        <begin position="1"/>
        <end position="89"/>
    </location>
</feature>
<feature type="region of interest" description="Disordered" evidence="2">
    <location>
        <begin position="1"/>
        <end position="31"/>
    </location>
</feature>
<feature type="compositionally biased region" description="Polar residues" evidence="2">
    <location>
        <begin position="9"/>
        <end position="18"/>
    </location>
</feature>
<comment type="function">
    <text evidence="1">Participates in the assembly of the infectious particles by decorating the outer surface of the capsid shell and thus forming a layer between the capsid and the tegument. Complexes composed of the major capsid protein and small capsomere-interacting protein/SCP assemble together in the host cytoplasm and are translocated to the nucleus, where they accumulate and participate in capsid assembly.</text>
</comment>
<comment type="subunit">
    <text evidence="1">Interacts with the major capsid protein/MCP.</text>
</comment>
<comment type="subcellular location">
    <subcellularLocation>
        <location evidence="1">Virion</location>
    </subcellularLocation>
    <subcellularLocation>
        <location evidence="1">Host nucleus</location>
    </subcellularLocation>
</comment>
<comment type="similarity">
    <text evidence="1">Belongs to the herpesviridae small capsomere-interacting protein family.</text>
</comment>
<dbReference type="EMBL" id="AB021506">
    <property type="protein sequence ID" value="BAA78253.1"/>
    <property type="molecule type" value="Genomic_DNA"/>
</dbReference>
<dbReference type="RefSeq" id="NP_050213.1">
    <property type="nucleotide sequence ID" value="NC_000898.1"/>
</dbReference>
<dbReference type="SMR" id="P0DTP2"/>
<dbReference type="GeneID" id="1497034"/>
<dbReference type="KEGG" id="vg:1497034"/>
<dbReference type="Proteomes" id="UP000142685">
    <property type="component" value="Segment"/>
</dbReference>
<dbReference type="GO" id="GO:0042025">
    <property type="term" value="C:host cell nucleus"/>
    <property type="evidence" value="ECO:0007669"/>
    <property type="project" value="UniProtKB-SubCell"/>
</dbReference>
<dbReference type="GO" id="GO:0019028">
    <property type="term" value="C:viral capsid"/>
    <property type="evidence" value="ECO:0007669"/>
    <property type="project" value="UniProtKB-UniRule"/>
</dbReference>
<dbReference type="GO" id="GO:0016032">
    <property type="term" value="P:viral process"/>
    <property type="evidence" value="ECO:0007669"/>
    <property type="project" value="UniProtKB-UniRule"/>
</dbReference>
<dbReference type="HAMAP" id="MF_04021">
    <property type="entry name" value="HSV_SCP_betahv"/>
    <property type="match status" value="1"/>
</dbReference>
<dbReference type="InterPro" id="IPR031385">
    <property type="entry name" value="HV_small_capsid"/>
</dbReference>
<dbReference type="Pfam" id="PF17086">
    <property type="entry name" value="HV_small_capsid"/>
    <property type="match status" value="1"/>
</dbReference>
<protein>
    <recommendedName>
        <fullName evidence="1">Small capsomere-interacting protein</fullName>
    </recommendedName>
</protein>
<keyword id="KW-0167">Capsid protein</keyword>
<keyword id="KW-1048">Host nucleus</keyword>
<keyword id="KW-0946">Virion</keyword>